<keyword id="KW-0067">ATP-binding</keyword>
<keyword id="KW-0963">Cytoplasm</keyword>
<keyword id="KW-0227">DNA damage</keyword>
<keyword id="KW-0233">DNA recombination</keyword>
<keyword id="KW-0234">DNA repair</keyword>
<keyword id="KW-0238">DNA-binding</keyword>
<keyword id="KW-0378">Hydrolase</keyword>
<keyword id="KW-0547">Nucleotide-binding</keyword>
<keyword id="KW-1185">Reference proteome</keyword>
<comment type="function">
    <text evidence="1">The RuvA-RuvB-RuvC complex processes Holliday junction (HJ) DNA during genetic recombination and DNA repair, while the RuvA-RuvB complex plays an important role in the rescue of blocked DNA replication forks via replication fork reversal (RFR). RuvA specifically binds to HJ cruciform DNA, conferring on it an open structure. The RuvB hexamer acts as an ATP-dependent pump, pulling dsDNA into and through the RuvAB complex. RuvB forms 2 homohexamers on either side of HJ DNA bound by 1 or 2 RuvA tetramers; 4 subunits per hexamer contact DNA at a time. Coordinated motions by a converter formed by DNA-disengaged RuvB subunits stimulates ATP hydrolysis and nucleotide exchange. Immobilization of the converter enables RuvB to convert the ATP-contained energy into a lever motion, pulling 2 nucleotides of DNA out of the RuvA tetramer per ATP hydrolyzed, thus driving DNA branch migration. The RuvB motors rotate together with the DNA substrate, which together with the progressing nucleotide cycle form the mechanistic basis for DNA recombination by continuous HJ branch migration. Branch migration allows RuvC to scan DNA until it finds its consensus sequence, where it cleaves and resolves cruciform DNA.</text>
</comment>
<comment type="catalytic activity">
    <reaction evidence="1">
        <text>ATP + H2O = ADP + phosphate + H(+)</text>
        <dbReference type="Rhea" id="RHEA:13065"/>
        <dbReference type="ChEBI" id="CHEBI:15377"/>
        <dbReference type="ChEBI" id="CHEBI:15378"/>
        <dbReference type="ChEBI" id="CHEBI:30616"/>
        <dbReference type="ChEBI" id="CHEBI:43474"/>
        <dbReference type="ChEBI" id="CHEBI:456216"/>
    </reaction>
</comment>
<comment type="subunit">
    <text evidence="1 2">Homohexamer. Forms an RuvA(8)-RuvB(12)-Holliday junction (HJ) complex. HJ DNA is sandwiched between 2 RuvA tetramers; dsDNA enters through RuvA and exits via RuvB. An RuvB hexamer assembles on each DNA strand where it exits the tetramer. Each RuvB hexamer is contacted by two RuvA subunits (via domain III) on 2 adjacent RuvB subunits; this complex drives branch migration. In the full resolvosome a probable DNA-RuvA(4)-RuvB(12)-RuvC(2) complex forms which resolves the HJ (By similarity). Homohexamer which interacts with RecU (PubMed:19422832).</text>
</comment>
<comment type="subcellular location">
    <subcellularLocation>
        <location evidence="1">Cytoplasm</location>
    </subcellularLocation>
</comment>
<comment type="domain">
    <text evidence="1">Has 3 domains, the large (RuvB-L) and small ATPase (RuvB-S) domains and the C-terminal head (RuvB-H) domain. The head domain binds DNA, while the ATPase domains jointly bind ATP, ADP or are empty depending on the state of the subunit in the translocation cycle. During a single DNA translocation step the structure of each domain remains the same, but their relative positions change.</text>
</comment>
<comment type="disruption phenotype">
    <text evidence="3">RecD2 is synthetically lethal with ruvAB (PubMed:28527403).</text>
</comment>
<comment type="similarity">
    <text evidence="1">Belongs to the RuvB family.</text>
</comment>
<name>RUVB_BACSU</name>
<evidence type="ECO:0000255" key="1">
    <source>
        <dbReference type="HAMAP-Rule" id="MF_00016"/>
    </source>
</evidence>
<evidence type="ECO:0000269" key="2">
    <source>
    </source>
</evidence>
<evidence type="ECO:0000269" key="3">
    <source>
    </source>
</evidence>
<feature type="chain" id="PRO_0000165493" description="Holliday junction branch migration complex subunit RuvB">
    <location>
        <begin position="1"/>
        <end position="334"/>
    </location>
</feature>
<feature type="region of interest" description="Large ATPase domain (RuvB-L)" evidence="1">
    <location>
        <begin position="1"/>
        <end position="182"/>
    </location>
</feature>
<feature type="region of interest" description="Small ATPAse domain (RuvB-S)" evidence="1">
    <location>
        <begin position="183"/>
        <end position="253"/>
    </location>
</feature>
<feature type="region of interest" description="Head domain (RuvB-H)" evidence="1">
    <location>
        <begin position="256"/>
        <end position="334"/>
    </location>
</feature>
<feature type="binding site" evidence="1">
    <location>
        <position position="21"/>
    </location>
    <ligand>
        <name>ATP</name>
        <dbReference type="ChEBI" id="CHEBI:30616"/>
    </ligand>
</feature>
<feature type="binding site" evidence="1">
    <location>
        <position position="22"/>
    </location>
    <ligand>
        <name>ATP</name>
        <dbReference type="ChEBI" id="CHEBI:30616"/>
    </ligand>
</feature>
<feature type="binding site" evidence="1">
    <location>
        <position position="63"/>
    </location>
    <ligand>
        <name>ATP</name>
        <dbReference type="ChEBI" id="CHEBI:30616"/>
    </ligand>
</feature>
<feature type="binding site" evidence="1">
    <location>
        <position position="66"/>
    </location>
    <ligand>
        <name>ATP</name>
        <dbReference type="ChEBI" id="CHEBI:30616"/>
    </ligand>
</feature>
<feature type="binding site" evidence="1">
    <location>
        <position position="67"/>
    </location>
    <ligand>
        <name>ATP</name>
        <dbReference type="ChEBI" id="CHEBI:30616"/>
    </ligand>
</feature>
<feature type="binding site" evidence="1">
    <location>
        <position position="67"/>
    </location>
    <ligand>
        <name>Mg(2+)</name>
        <dbReference type="ChEBI" id="CHEBI:18420"/>
    </ligand>
</feature>
<feature type="binding site" evidence="1">
    <location>
        <position position="68"/>
    </location>
    <ligand>
        <name>ATP</name>
        <dbReference type="ChEBI" id="CHEBI:30616"/>
    </ligand>
</feature>
<feature type="binding site" evidence="1">
    <location>
        <begin position="129"/>
        <end position="131"/>
    </location>
    <ligand>
        <name>ATP</name>
        <dbReference type="ChEBI" id="CHEBI:30616"/>
    </ligand>
</feature>
<feature type="binding site" evidence="1">
    <location>
        <position position="172"/>
    </location>
    <ligand>
        <name>ATP</name>
        <dbReference type="ChEBI" id="CHEBI:30616"/>
    </ligand>
</feature>
<feature type="binding site" evidence="1">
    <location>
        <position position="182"/>
    </location>
    <ligand>
        <name>ATP</name>
        <dbReference type="ChEBI" id="CHEBI:30616"/>
    </ligand>
</feature>
<feature type="binding site" evidence="1">
    <location>
        <position position="219"/>
    </location>
    <ligand>
        <name>ATP</name>
        <dbReference type="ChEBI" id="CHEBI:30616"/>
    </ligand>
</feature>
<feature type="binding site" evidence="1">
    <location>
        <position position="311"/>
    </location>
    <ligand>
        <name>DNA</name>
        <dbReference type="ChEBI" id="CHEBI:16991"/>
    </ligand>
</feature>
<feature type="binding site" evidence="1">
    <location>
        <position position="316"/>
    </location>
    <ligand>
        <name>DNA</name>
        <dbReference type="ChEBI" id="CHEBI:16991"/>
    </ligand>
</feature>
<accession>O32055</accession>
<dbReference type="EC" id="3.6.4.-" evidence="1"/>
<dbReference type="EMBL" id="Y15896">
    <property type="protein sequence ID" value="CAB75331.1"/>
    <property type="molecule type" value="Genomic_DNA"/>
</dbReference>
<dbReference type="EMBL" id="AL009126">
    <property type="protein sequence ID" value="CAB14733.2"/>
    <property type="molecule type" value="Genomic_DNA"/>
</dbReference>
<dbReference type="PIR" id="F69702">
    <property type="entry name" value="F69702"/>
</dbReference>
<dbReference type="RefSeq" id="WP_003229718.1">
    <property type="nucleotide sequence ID" value="NZ_OZ025638.1"/>
</dbReference>
<dbReference type="RefSeq" id="YP_054590.1">
    <property type="nucleotide sequence ID" value="NC_000964.3"/>
</dbReference>
<dbReference type="SMR" id="O32055"/>
<dbReference type="FunCoup" id="O32055">
    <property type="interactions" value="509"/>
</dbReference>
<dbReference type="STRING" id="224308.BSU27730"/>
<dbReference type="PaxDb" id="224308-BSU27730"/>
<dbReference type="EnsemblBacteria" id="CAB14733">
    <property type="protein sequence ID" value="CAB14733"/>
    <property type="gene ID" value="BSU_27730"/>
</dbReference>
<dbReference type="GeneID" id="2914219"/>
<dbReference type="KEGG" id="bsu:BSU27730"/>
<dbReference type="PATRIC" id="fig|224308.179.peg.3013"/>
<dbReference type="eggNOG" id="COG2255">
    <property type="taxonomic scope" value="Bacteria"/>
</dbReference>
<dbReference type="InParanoid" id="O32055"/>
<dbReference type="OrthoDB" id="9804478at2"/>
<dbReference type="PhylomeDB" id="O32055"/>
<dbReference type="BioCyc" id="BSUB:BSU27730-MONOMER"/>
<dbReference type="Proteomes" id="UP000001570">
    <property type="component" value="Chromosome"/>
</dbReference>
<dbReference type="GO" id="GO:0005737">
    <property type="term" value="C:cytoplasm"/>
    <property type="evidence" value="ECO:0007669"/>
    <property type="project" value="UniProtKB-SubCell"/>
</dbReference>
<dbReference type="GO" id="GO:0048476">
    <property type="term" value="C:Holliday junction resolvase complex"/>
    <property type="evidence" value="ECO:0007669"/>
    <property type="project" value="UniProtKB-UniRule"/>
</dbReference>
<dbReference type="GO" id="GO:0005524">
    <property type="term" value="F:ATP binding"/>
    <property type="evidence" value="ECO:0007669"/>
    <property type="project" value="UniProtKB-UniRule"/>
</dbReference>
<dbReference type="GO" id="GO:0016887">
    <property type="term" value="F:ATP hydrolysis activity"/>
    <property type="evidence" value="ECO:0007669"/>
    <property type="project" value="InterPro"/>
</dbReference>
<dbReference type="GO" id="GO:0000400">
    <property type="term" value="F:four-way junction DNA binding"/>
    <property type="evidence" value="ECO:0007669"/>
    <property type="project" value="UniProtKB-UniRule"/>
</dbReference>
<dbReference type="GO" id="GO:0009378">
    <property type="term" value="F:four-way junction helicase activity"/>
    <property type="evidence" value="ECO:0007669"/>
    <property type="project" value="InterPro"/>
</dbReference>
<dbReference type="GO" id="GO:0006310">
    <property type="term" value="P:DNA recombination"/>
    <property type="evidence" value="ECO:0007669"/>
    <property type="project" value="UniProtKB-UniRule"/>
</dbReference>
<dbReference type="GO" id="GO:0006281">
    <property type="term" value="P:DNA repair"/>
    <property type="evidence" value="ECO:0007669"/>
    <property type="project" value="UniProtKB-UniRule"/>
</dbReference>
<dbReference type="CDD" id="cd00009">
    <property type="entry name" value="AAA"/>
    <property type="match status" value="1"/>
</dbReference>
<dbReference type="Gene3D" id="1.10.8.60">
    <property type="match status" value="1"/>
</dbReference>
<dbReference type="Gene3D" id="3.40.50.300">
    <property type="entry name" value="P-loop containing nucleotide triphosphate hydrolases"/>
    <property type="match status" value="1"/>
</dbReference>
<dbReference type="Gene3D" id="1.10.10.10">
    <property type="entry name" value="Winged helix-like DNA-binding domain superfamily/Winged helix DNA-binding domain"/>
    <property type="match status" value="1"/>
</dbReference>
<dbReference type="HAMAP" id="MF_00016">
    <property type="entry name" value="DNA_HJ_migration_RuvB"/>
    <property type="match status" value="1"/>
</dbReference>
<dbReference type="InterPro" id="IPR003593">
    <property type="entry name" value="AAA+_ATPase"/>
</dbReference>
<dbReference type="InterPro" id="IPR041445">
    <property type="entry name" value="AAA_lid_4"/>
</dbReference>
<dbReference type="InterPro" id="IPR004605">
    <property type="entry name" value="DNA_helicase_Holl-junc_RuvB"/>
</dbReference>
<dbReference type="InterPro" id="IPR027417">
    <property type="entry name" value="P-loop_NTPase"/>
</dbReference>
<dbReference type="InterPro" id="IPR008824">
    <property type="entry name" value="RuvB-like_N"/>
</dbReference>
<dbReference type="InterPro" id="IPR008823">
    <property type="entry name" value="RuvB_C"/>
</dbReference>
<dbReference type="InterPro" id="IPR036388">
    <property type="entry name" value="WH-like_DNA-bd_sf"/>
</dbReference>
<dbReference type="InterPro" id="IPR036390">
    <property type="entry name" value="WH_DNA-bd_sf"/>
</dbReference>
<dbReference type="NCBIfam" id="NF000868">
    <property type="entry name" value="PRK00080.1"/>
    <property type="match status" value="1"/>
</dbReference>
<dbReference type="NCBIfam" id="TIGR00635">
    <property type="entry name" value="ruvB"/>
    <property type="match status" value="1"/>
</dbReference>
<dbReference type="PANTHER" id="PTHR42848">
    <property type="match status" value="1"/>
</dbReference>
<dbReference type="PANTHER" id="PTHR42848:SF1">
    <property type="entry name" value="HOLLIDAY JUNCTION BRANCH MIGRATION COMPLEX SUBUNIT RUVB"/>
    <property type="match status" value="1"/>
</dbReference>
<dbReference type="Pfam" id="PF17864">
    <property type="entry name" value="AAA_lid_4"/>
    <property type="match status" value="1"/>
</dbReference>
<dbReference type="Pfam" id="PF05491">
    <property type="entry name" value="RuvB_C"/>
    <property type="match status" value="1"/>
</dbReference>
<dbReference type="Pfam" id="PF05496">
    <property type="entry name" value="RuvB_N"/>
    <property type="match status" value="1"/>
</dbReference>
<dbReference type="SMART" id="SM00382">
    <property type="entry name" value="AAA"/>
    <property type="match status" value="1"/>
</dbReference>
<dbReference type="SUPFAM" id="SSF52540">
    <property type="entry name" value="P-loop containing nucleoside triphosphate hydrolases"/>
    <property type="match status" value="1"/>
</dbReference>
<dbReference type="SUPFAM" id="SSF46785">
    <property type="entry name" value="Winged helix' DNA-binding domain"/>
    <property type="match status" value="1"/>
</dbReference>
<gene>
    <name evidence="1" type="primary">ruvB</name>
    <name type="ordered locus">BSU27730</name>
</gene>
<organism>
    <name type="scientific">Bacillus subtilis (strain 168)</name>
    <dbReference type="NCBI Taxonomy" id="224308"/>
    <lineage>
        <taxon>Bacteria</taxon>
        <taxon>Bacillati</taxon>
        <taxon>Bacillota</taxon>
        <taxon>Bacilli</taxon>
        <taxon>Bacillales</taxon>
        <taxon>Bacillaceae</taxon>
        <taxon>Bacillus</taxon>
    </lineage>
</organism>
<proteinExistence type="evidence at protein level"/>
<sequence>MDERLVSSEADNHESVIEQSLRPQNLAQYIGQHKVKENLRVFIDAAKMRQETLDHVLLYGPPGLGKTTLASIVANEMGVELRTTSGPAIERPGDLAAILTALEPGDVLFIDEIHRLHRSIEEVLYPAMEDFCLDIVIGKGPSARSVRLDLPPFTLVGATTRVGLLTAPLRDRFGVMSRLEYYTQEELADIVTRTADVFEVEIDKPSALEIARRSRGTPRVANRLLRRVRDFAQVLGDSRITEDISQNALERLQVDRLGLDHIDHKLLMGMIEKFNGGPVGLDTISATIGEESHTIEDVYEPYLLQIGFIQRTPRGRIVTPAVYHHFQMEAPRYD</sequence>
<reference key="1">
    <citation type="submission" date="1997-12" db="EMBL/GenBank/DDBJ databases">
        <title>A 17.8 kb segment in the spoVB-nadC region of the Bacillus subtilis 168 chromosome: sequencing and ruv operon identification.</title>
        <authorList>
            <person name="Tosato V."/>
            <person name="Bolotin A."/>
            <person name="Bertani I."/>
            <person name="Valentino I."/>
            <person name="Bruschi C.V."/>
        </authorList>
    </citation>
    <scope>NUCLEOTIDE SEQUENCE [GENOMIC DNA]</scope>
    <source>
        <strain>168</strain>
    </source>
</reference>
<reference key="2">
    <citation type="journal article" date="1997" name="Nature">
        <title>The complete genome sequence of the Gram-positive bacterium Bacillus subtilis.</title>
        <authorList>
            <person name="Kunst F."/>
            <person name="Ogasawara N."/>
            <person name="Moszer I."/>
            <person name="Albertini A.M."/>
            <person name="Alloni G."/>
            <person name="Azevedo V."/>
            <person name="Bertero M.G."/>
            <person name="Bessieres P."/>
            <person name="Bolotin A."/>
            <person name="Borchert S."/>
            <person name="Borriss R."/>
            <person name="Boursier L."/>
            <person name="Brans A."/>
            <person name="Braun M."/>
            <person name="Brignell S.C."/>
            <person name="Bron S."/>
            <person name="Brouillet S."/>
            <person name="Bruschi C.V."/>
            <person name="Caldwell B."/>
            <person name="Capuano V."/>
            <person name="Carter N.M."/>
            <person name="Choi S.-K."/>
            <person name="Codani J.-J."/>
            <person name="Connerton I.F."/>
            <person name="Cummings N.J."/>
            <person name="Daniel R.A."/>
            <person name="Denizot F."/>
            <person name="Devine K.M."/>
            <person name="Duesterhoeft A."/>
            <person name="Ehrlich S.D."/>
            <person name="Emmerson P.T."/>
            <person name="Entian K.-D."/>
            <person name="Errington J."/>
            <person name="Fabret C."/>
            <person name="Ferrari E."/>
            <person name="Foulger D."/>
            <person name="Fritz C."/>
            <person name="Fujita M."/>
            <person name="Fujita Y."/>
            <person name="Fuma S."/>
            <person name="Galizzi A."/>
            <person name="Galleron N."/>
            <person name="Ghim S.-Y."/>
            <person name="Glaser P."/>
            <person name="Goffeau A."/>
            <person name="Golightly E.J."/>
            <person name="Grandi G."/>
            <person name="Guiseppi G."/>
            <person name="Guy B.J."/>
            <person name="Haga K."/>
            <person name="Haiech J."/>
            <person name="Harwood C.R."/>
            <person name="Henaut A."/>
            <person name="Hilbert H."/>
            <person name="Holsappel S."/>
            <person name="Hosono S."/>
            <person name="Hullo M.-F."/>
            <person name="Itaya M."/>
            <person name="Jones L.-M."/>
            <person name="Joris B."/>
            <person name="Karamata D."/>
            <person name="Kasahara Y."/>
            <person name="Klaerr-Blanchard M."/>
            <person name="Klein C."/>
            <person name="Kobayashi Y."/>
            <person name="Koetter P."/>
            <person name="Koningstein G."/>
            <person name="Krogh S."/>
            <person name="Kumano M."/>
            <person name="Kurita K."/>
            <person name="Lapidus A."/>
            <person name="Lardinois S."/>
            <person name="Lauber J."/>
            <person name="Lazarevic V."/>
            <person name="Lee S.-M."/>
            <person name="Levine A."/>
            <person name="Liu H."/>
            <person name="Masuda S."/>
            <person name="Mauel C."/>
            <person name="Medigue C."/>
            <person name="Medina N."/>
            <person name="Mellado R.P."/>
            <person name="Mizuno M."/>
            <person name="Moestl D."/>
            <person name="Nakai S."/>
            <person name="Noback M."/>
            <person name="Noone D."/>
            <person name="O'Reilly M."/>
            <person name="Ogawa K."/>
            <person name="Ogiwara A."/>
            <person name="Oudega B."/>
            <person name="Park S.-H."/>
            <person name="Parro V."/>
            <person name="Pohl T.M."/>
            <person name="Portetelle D."/>
            <person name="Porwollik S."/>
            <person name="Prescott A.M."/>
            <person name="Presecan E."/>
            <person name="Pujic P."/>
            <person name="Purnelle B."/>
            <person name="Rapoport G."/>
            <person name="Rey M."/>
            <person name="Reynolds S."/>
            <person name="Rieger M."/>
            <person name="Rivolta C."/>
            <person name="Rocha E."/>
            <person name="Roche B."/>
            <person name="Rose M."/>
            <person name="Sadaie Y."/>
            <person name="Sato T."/>
            <person name="Scanlan E."/>
            <person name="Schleich S."/>
            <person name="Schroeter R."/>
            <person name="Scoffone F."/>
            <person name="Sekiguchi J."/>
            <person name="Sekowska A."/>
            <person name="Seror S.J."/>
            <person name="Serror P."/>
            <person name="Shin B.-S."/>
            <person name="Soldo B."/>
            <person name="Sorokin A."/>
            <person name="Tacconi E."/>
            <person name="Takagi T."/>
            <person name="Takahashi H."/>
            <person name="Takemaru K."/>
            <person name="Takeuchi M."/>
            <person name="Tamakoshi A."/>
            <person name="Tanaka T."/>
            <person name="Terpstra P."/>
            <person name="Tognoni A."/>
            <person name="Tosato V."/>
            <person name="Uchiyama S."/>
            <person name="Vandenbol M."/>
            <person name="Vannier F."/>
            <person name="Vassarotti A."/>
            <person name="Viari A."/>
            <person name="Wambutt R."/>
            <person name="Wedler E."/>
            <person name="Wedler H."/>
            <person name="Weitzenegger T."/>
            <person name="Winters P."/>
            <person name="Wipat A."/>
            <person name="Yamamoto H."/>
            <person name="Yamane K."/>
            <person name="Yasumoto K."/>
            <person name="Yata K."/>
            <person name="Yoshida K."/>
            <person name="Yoshikawa H.-F."/>
            <person name="Zumstein E."/>
            <person name="Yoshikawa H."/>
            <person name="Danchin A."/>
        </authorList>
    </citation>
    <scope>NUCLEOTIDE SEQUENCE [LARGE SCALE GENOMIC DNA]</scope>
    <source>
        <strain>168</strain>
    </source>
</reference>
<reference key="3">
    <citation type="journal article" date="2009" name="J. Mol. Biol.">
        <title>The N-terminal region of the RecU Holliday junction resolvase is essential for homologous recombination.</title>
        <authorList>
            <person name="Carrasco B."/>
            <person name="Canas C."/>
            <person name="Sharples G.J."/>
            <person name="Alonso J.C."/>
            <person name="Ayora S."/>
        </authorList>
    </citation>
    <scope>SUBUNIT</scope>
    <scope>INTERACTION WITH RECU</scope>
    <source>
        <strain>168 / YB886 / BG214</strain>
    </source>
</reference>
<reference key="4">
    <citation type="journal article" date="2017" name="DNA Repair">
        <title>Interplay between Bacillus subtilis RecD2 and the RecG or RuvAB helicase in recombinational repair.</title>
        <authorList>
            <person name="Torres R."/>
            <person name="Romero H."/>
            <person name="Rodriguez-Cerrato V."/>
            <person name="Alonso J.C."/>
        </authorList>
    </citation>
    <scope>DISRUPTION PHENOTYPE</scope>
    <source>
        <strain>168 / YB886 / BG214</strain>
    </source>
</reference>
<protein>
    <recommendedName>
        <fullName evidence="1">Holliday junction branch migration complex subunit RuvB</fullName>
        <ecNumber evidence="1">3.6.4.-</ecNumber>
    </recommendedName>
</protein>